<accession>A6TD87</accession>
<name>RLMM_KLEP7</name>
<reference key="1">
    <citation type="submission" date="2006-09" db="EMBL/GenBank/DDBJ databases">
        <authorList>
            <consortium name="The Klebsiella pneumonia Genome Sequencing Project"/>
            <person name="McClelland M."/>
            <person name="Sanderson E.K."/>
            <person name="Spieth J."/>
            <person name="Clifton W.S."/>
            <person name="Latreille P."/>
            <person name="Sabo A."/>
            <person name="Pepin K."/>
            <person name="Bhonagiri V."/>
            <person name="Porwollik S."/>
            <person name="Ali J."/>
            <person name="Wilson R.K."/>
        </authorList>
    </citation>
    <scope>NUCLEOTIDE SEQUENCE [LARGE SCALE GENOMIC DNA]</scope>
    <source>
        <strain>ATCC 700721 / MGH 78578</strain>
    </source>
</reference>
<gene>
    <name evidence="1" type="primary">rlmM</name>
    <name type="ordered locus">KPN78578_30970</name>
    <name type="ORF">KPN_03157</name>
</gene>
<organism>
    <name type="scientific">Klebsiella pneumoniae subsp. pneumoniae (strain ATCC 700721 / MGH 78578)</name>
    <dbReference type="NCBI Taxonomy" id="272620"/>
    <lineage>
        <taxon>Bacteria</taxon>
        <taxon>Pseudomonadati</taxon>
        <taxon>Pseudomonadota</taxon>
        <taxon>Gammaproteobacteria</taxon>
        <taxon>Enterobacterales</taxon>
        <taxon>Enterobacteriaceae</taxon>
        <taxon>Klebsiella/Raoultella group</taxon>
        <taxon>Klebsiella</taxon>
        <taxon>Klebsiella pneumoniae complex</taxon>
    </lineage>
</organism>
<protein>
    <recommendedName>
        <fullName evidence="1">Ribosomal RNA large subunit methyltransferase M</fullName>
        <ecNumber evidence="1">2.1.1.186</ecNumber>
    </recommendedName>
    <alternativeName>
        <fullName evidence="1">23S rRNA (cytidine2498-2'-O)-methyltransferase</fullName>
    </alternativeName>
    <alternativeName>
        <fullName evidence="1">23S rRNA 2'-O-ribose methyltransferase RlmM</fullName>
    </alternativeName>
</protein>
<comment type="function">
    <text evidence="1">Catalyzes the 2'-O-methylation at nucleotide C2498 in 23S rRNA.</text>
</comment>
<comment type="catalytic activity">
    <reaction evidence="1">
        <text>cytidine(2498) in 23S rRNA + S-adenosyl-L-methionine = 2'-O-methylcytidine(2498) in 23S rRNA + S-adenosyl-L-homocysteine + H(+)</text>
        <dbReference type="Rhea" id="RHEA:42788"/>
        <dbReference type="Rhea" id="RHEA-COMP:10244"/>
        <dbReference type="Rhea" id="RHEA-COMP:10245"/>
        <dbReference type="ChEBI" id="CHEBI:15378"/>
        <dbReference type="ChEBI" id="CHEBI:57856"/>
        <dbReference type="ChEBI" id="CHEBI:59789"/>
        <dbReference type="ChEBI" id="CHEBI:74495"/>
        <dbReference type="ChEBI" id="CHEBI:82748"/>
        <dbReference type="EC" id="2.1.1.186"/>
    </reaction>
</comment>
<comment type="subunit">
    <text evidence="1">Monomer.</text>
</comment>
<comment type="subcellular location">
    <subcellularLocation>
        <location evidence="1">Cytoplasm</location>
    </subcellularLocation>
</comment>
<comment type="similarity">
    <text evidence="1">Belongs to the class I-like SAM-binding methyltransferase superfamily. RNA methyltransferase RlmE family. RlmM subfamily.</text>
</comment>
<proteinExistence type="inferred from homology"/>
<keyword id="KW-0963">Cytoplasm</keyword>
<keyword id="KW-0489">Methyltransferase</keyword>
<keyword id="KW-0698">rRNA processing</keyword>
<keyword id="KW-0949">S-adenosyl-L-methionine</keyword>
<keyword id="KW-0808">Transferase</keyword>
<feature type="chain" id="PRO_0000314521" description="Ribosomal RNA large subunit methyltransferase M">
    <location>
        <begin position="1"/>
        <end position="366"/>
    </location>
</feature>
<feature type="active site" description="Proton acceptor" evidence="1">
    <location>
        <position position="306"/>
    </location>
</feature>
<feature type="binding site" evidence="1">
    <location>
        <position position="188"/>
    </location>
    <ligand>
        <name>S-adenosyl-L-methionine</name>
        <dbReference type="ChEBI" id="CHEBI:59789"/>
    </ligand>
</feature>
<feature type="binding site" evidence="1">
    <location>
        <begin position="221"/>
        <end position="224"/>
    </location>
    <ligand>
        <name>S-adenosyl-L-methionine</name>
        <dbReference type="ChEBI" id="CHEBI:59789"/>
    </ligand>
</feature>
<feature type="binding site" evidence="1">
    <location>
        <position position="240"/>
    </location>
    <ligand>
        <name>S-adenosyl-L-methionine</name>
        <dbReference type="ChEBI" id="CHEBI:59789"/>
    </ligand>
</feature>
<feature type="binding site" evidence="1">
    <location>
        <position position="260"/>
    </location>
    <ligand>
        <name>S-adenosyl-L-methionine</name>
        <dbReference type="ChEBI" id="CHEBI:59789"/>
    </ligand>
</feature>
<feature type="binding site" evidence="1">
    <location>
        <position position="277"/>
    </location>
    <ligand>
        <name>S-adenosyl-L-methionine</name>
        <dbReference type="ChEBI" id="CHEBI:59789"/>
    </ligand>
</feature>
<evidence type="ECO:0000255" key="1">
    <source>
        <dbReference type="HAMAP-Rule" id="MF_01551"/>
    </source>
</evidence>
<sequence length="366" mass="41935">MNKVVLYCRPGFEKECAAEITDKAARLEVFGFARVKEDSGYVIFEGYQQDDGEKLVRDLPFSSLIFARQMFVVGELLRDLPPEDRITPIVGMLQGMVEKGGELRVEVADTNESKELMKFCRKFTVPLRAALREAGVLTNYETPKRPVVHVFFIAPGCCYTGYSYSNNNSPFYMGIPRLKFPSDAPSRSTLKLEEAFHVFIPADEWDERLANGMYAVDLGACPGGWTYQLVKRNMWVSSVDNGPMAQSLMDTGQVTWLREDGFRYRPNRNNISWMVCDMVEKPAKVAALMAQWLVNGWCRETIFNLKLPMKKRYEEVSQNLAYIQAQLDEHGVNAQIQARQLYHDREEVTVHVRRLWAAVGGRRDER</sequence>
<dbReference type="EC" id="2.1.1.186" evidence="1"/>
<dbReference type="EMBL" id="CP000647">
    <property type="protein sequence ID" value="ABR78558.1"/>
    <property type="molecule type" value="Genomic_DNA"/>
</dbReference>
<dbReference type="RefSeq" id="WP_015958901.1">
    <property type="nucleotide sequence ID" value="NC_009648.1"/>
</dbReference>
<dbReference type="SMR" id="A6TD87"/>
<dbReference type="STRING" id="272620.KPN_03157"/>
<dbReference type="PaxDb" id="272620-KPN_03157"/>
<dbReference type="EnsemblBacteria" id="ABR78558">
    <property type="protein sequence ID" value="ABR78558"/>
    <property type="gene ID" value="KPN_03157"/>
</dbReference>
<dbReference type="KEGG" id="kpn:KPN_03157"/>
<dbReference type="HOGENOM" id="CLU_043780_0_0_6"/>
<dbReference type="Proteomes" id="UP000000265">
    <property type="component" value="Chromosome"/>
</dbReference>
<dbReference type="GO" id="GO:0005737">
    <property type="term" value="C:cytoplasm"/>
    <property type="evidence" value="ECO:0007669"/>
    <property type="project" value="UniProtKB-SubCell"/>
</dbReference>
<dbReference type="GO" id="GO:0008757">
    <property type="term" value="F:S-adenosylmethionine-dependent methyltransferase activity"/>
    <property type="evidence" value="ECO:0007669"/>
    <property type="project" value="UniProtKB-UniRule"/>
</dbReference>
<dbReference type="GO" id="GO:0032259">
    <property type="term" value="P:methylation"/>
    <property type="evidence" value="ECO:0007669"/>
    <property type="project" value="UniProtKB-KW"/>
</dbReference>
<dbReference type="GO" id="GO:0006364">
    <property type="term" value="P:rRNA processing"/>
    <property type="evidence" value="ECO:0007669"/>
    <property type="project" value="UniProtKB-UniRule"/>
</dbReference>
<dbReference type="FunFam" id="3.30.2300.20:FF:000001">
    <property type="entry name" value="Ribosomal RNA large subunit methyltransferase M"/>
    <property type="match status" value="1"/>
</dbReference>
<dbReference type="FunFam" id="3.40.50.150:FF:000020">
    <property type="entry name" value="Ribosomal RNA large subunit methyltransferase M"/>
    <property type="match status" value="1"/>
</dbReference>
<dbReference type="Gene3D" id="3.30.2300.20">
    <property type="match status" value="1"/>
</dbReference>
<dbReference type="Gene3D" id="3.30.70.2810">
    <property type="match status" value="1"/>
</dbReference>
<dbReference type="Gene3D" id="3.40.50.150">
    <property type="entry name" value="Vaccinia Virus protein VP39"/>
    <property type="match status" value="1"/>
</dbReference>
<dbReference type="HAMAP" id="MF_01551">
    <property type="entry name" value="23SrRNA_methyltr_M"/>
    <property type="match status" value="1"/>
</dbReference>
<dbReference type="InterPro" id="IPR040739">
    <property type="entry name" value="RlmM_FDX"/>
</dbReference>
<dbReference type="InterPro" id="IPR048646">
    <property type="entry name" value="RlmM_THUMP-like"/>
</dbReference>
<dbReference type="InterPro" id="IPR002877">
    <property type="entry name" value="RNA_MeTrfase_FtsJ_dom"/>
</dbReference>
<dbReference type="InterPro" id="IPR011224">
    <property type="entry name" value="rRNA_MeTrfase_M"/>
</dbReference>
<dbReference type="InterPro" id="IPR029063">
    <property type="entry name" value="SAM-dependent_MTases_sf"/>
</dbReference>
<dbReference type="NCBIfam" id="NF008734">
    <property type="entry name" value="PRK11760.1"/>
    <property type="match status" value="1"/>
</dbReference>
<dbReference type="PANTHER" id="PTHR37524">
    <property type="entry name" value="RIBOSOMAL RNA LARGE SUBUNIT METHYLTRANSFERASE M"/>
    <property type="match status" value="1"/>
</dbReference>
<dbReference type="PANTHER" id="PTHR37524:SF2">
    <property type="entry name" value="RIBOSOMAL RNA METHYLTRANSFERASE FTSJ DOMAIN-CONTAINING PROTEIN"/>
    <property type="match status" value="1"/>
</dbReference>
<dbReference type="Pfam" id="PF01728">
    <property type="entry name" value="FtsJ"/>
    <property type="match status" value="1"/>
</dbReference>
<dbReference type="Pfam" id="PF18125">
    <property type="entry name" value="RlmM_FDX"/>
    <property type="match status" value="1"/>
</dbReference>
<dbReference type="Pfam" id="PF21239">
    <property type="entry name" value="RLMM_N"/>
    <property type="match status" value="1"/>
</dbReference>
<dbReference type="PIRSF" id="PIRSF028774">
    <property type="entry name" value="UCP028774"/>
    <property type="match status" value="1"/>
</dbReference>
<dbReference type="SUPFAM" id="SSF53335">
    <property type="entry name" value="S-adenosyl-L-methionine-dependent methyltransferases"/>
    <property type="match status" value="1"/>
</dbReference>